<protein>
    <recommendedName>
        <fullName>Peptidoglycan recognition protein 1</fullName>
    </recommendedName>
</protein>
<reference key="1">
    <citation type="journal article" date="2008" name="Genomics">
        <title>Analysis of sequence variability and protein domain architectures for bovine peptidoglycan recognition protein 1 and Toll-like receptors 2 and 6.</title>
        <authorList>
            <person name="Seabury C.M."/>
            <person name="Womack J.E."/>
        </authorList>
    </citation>
    <scope>NUCLEOTIDE SEQUENCE [GENOMIC DNA]</scope>
    <source>
        <strain>Isolate 23</strain>
        <strain>Isolate 86</strain>
    </source>
</reference>
<gene>
    <name type="primary">PGLYRP1</name>
</gene>
<organism>
    <name type="scientific">Bos indicus</name>
    <name type="common">Zebu</name>
    <dbReference type="NCBI Taxonomy" id="9915"/>
    <lineage>
        <taxon>Eukaryota</taxon>
        <taxon>Metazoa</taxon>
        <taxon>Chordata</taxon>
        <taxon>Craniata</taxon>
        <taxon>Vertebrata</taxon>
        <taxon>Euteleostomi</taxon>
        <taxon>Mammalia</taxon>
        <taxon>Eutheria</taxon>
        <taxon>Laurasiatheria</taxon>
        <taxon>Artiodactyla</taxon>
        <taxon>Ruminantia</taxon>
        <taxon>Pecora</taxon>
        <taxon>Bovidae</taxon>
        <taxon>Bovinae</taxon>
        <taxon>Bos</taxon>
    </lineage>
</organism>
<feature type="signal peptide" evidence="1">
    <location>
        <begin position="1"/>
        <end position="21"/>
    </location>
</feature>
<feature type="chain" id="PRO_0000363765" description="Peptidoglycan recognition protein 1">
    <location>
        <begin position="22"/>
        <end position="190"/>
    </location>
</feature>
<feature type="domain" description="N-acetylmuramoyl-L-alanine amidase" evidence="4">
    <location>
        <begin position="46"/>
        <end position="174"/>
    </location>
</feature>
<feature type="modified residue" description="Pyrrolidone carboxylic acid" evidence="3">
    <location>
        <position position="22"/>
    </location>
</feature>
<feature type="disulfide bond" evidence="1">
    <location>
        <begin position="24"/>
        <end position="148"/>
    </location>
</feature>
<feature type="disulfide bond" evidence="1">
    <location>
        <begin position="40"/>
        <end position="85"/>
    </location>
</feature>
<feature type="disulfide bond" evidence="1">
    <location>
        <begin position="61"/>
        <end position="67"/>
    </location>
</feature>
<name>PGRP1_BOSIN</name>
<proteinExistence type="inferred from homology"/>
<comment type="function">
    <text evidence="2">Innate immunity protein that plays several important functions in antimicrobial and antitumor defense systems. Acts as a pattern receptor that binds to murein peptidoglycans (PGN) of Gram-positive bacteria and thus provides bactericidal activity. Forms an equimolar complex with heat shock protein HSPA1A and induces programmed cell death through apoptosis and necroptosis in tumor cell lines by activating the TNFR1 receptor on the target cell membrane. In addition, acts in complex with the Ca(2+)-binding protein S100A4 as a chemoattractant able to induce lymphocyte movement. Mechanistically, this complex acts as a ligand of the chemotactic receptors CCR5 and CXCR3 which are present on the cells of the immune system. Promotes also the activation of lymphocytes that become able to kill virus-infected cells as well as tumor cells by modulating the spectrum of their target-cell specificity. Induction of cytotoxicity on monocyte surface requires interaction with TREM1 receptor.</text>
</comment>
<comment type="subunit">
    <text evidence="1">Homodimer; disulfide-linked.</text>
</comment>
<comment type="subcellular location">
    <subcellularLocation>
        <location evidence="1">Secreted</location>
    </subcellularLocation>
    <subcellularLocation>
        <location evidence="1">Cytoplasmic granule</location>
    </subcellularLocation>
</comment>
<comment type="similarity">
    <text evidence="5">Belongs to the N-acetylmuramoyl-L-alanine amidase 2 family.</text>
</comment>
<evidence type="ECO:0000250" key="1"/>
<evidence type="ECO:0000250" key="2">
    <source>
        <dbReference type="UniProtKB" id="O75594"/>
    </source>
</evidence>
<evidence type="ECO:0000250" key="3">
    <source>
        <dbReference type="UniProtKB" id="Q8SPP7"/>
    </source>
</evidence>
<evidence type="ECO:0000255" key="4"/>
<evidence type="ECO:0000305" key="5"/>
<accession>B5T255</accession>
<dbReference type="EMBL" id="EU746449">
    <property type="protein sequence ID" value="ACH92778.1"/>
    <property type="molecule type" value="Genomic_DNA"/>
</dbReference>
<dbReference type="EMBL" id="EU746453">
    <property type="protein sequence ID" value="ACH92782.1"/>
    <property type="molecule type" value="Genomic_DNA"/>
</dbReference>
<dbReference type="RefSeq" id="XP_019834179.1">
    <property type="nucleotide sequence ID" value="XM_019978620.2"/>
</dbReference>
<dbReference type="SMR" id="B5T255"/>
<dbReference type="GeneID" id="109572082"/>
<dbReference type="KEGG" id="biu:109572082"/>
<dbReference type="CTD" id="8993"/>
<dbReference type="OrthoDB" id="40187at91561"/>
<dbReference type="Proteomes" id="UP000515132">
    <property type="component" value="Chromosome 18"/>
</dbReference>
<dbReference type="GO" id="GO:0005576">
    <property type="term" value="C:extracellular region"/>
    <property type="evidence" value="ECO:0007669"/>
    <property type="project" value="UniProtKB-SubCell"/>
</dbReference>
<dbReference type="GO" id="GO:0008745">
    <property type="term" value="F:N-acetylmuramoyl-L-alanine amidase activity"/>
    <property type="evidence" value="ECO:0007669"/>
    <property type="project" value="InterPro"/>
</dbReference>
<dbReference type="GO" id="GO:0042834">
    <property type="term" value="F:peptidoglycan binding"/>
    <property type="evidence" value="ECO:0000250"/>
    <property type="project" value="UniProtKB"/>
</dbReference>
<dbReference type="GO" id="GO:0016019">
    <property type="term" value="F:peptidoglycan immune receptor activity"/>
    <property type="evidence" value="ECO:0007669"/>
    <property type="project" value="TreeGrafter"/>
</dbReference>
<dbReference type="GO" id="GO:0008270">
    <property type="term" value="F:zinc ion binding"/>
    <property type="evidence" value="ECO:0007669"/>
    <property type="project" value="InterPro"/>
</dbReference>
<dbReference type="GO" id="GO:0050832">
    <property type="term" value="P:defense response to fungus"/>
    <property type="evidence" value="ECO:0007669"/>
    <property type="project" value="UniProtKB-KW"/>
</dbReference>
<dbReference type="GO" id="GO:0050830">
    <property type="term" value="P:defense response to Gram-positive bacterium"/>
    <property type="evidence" value="ECO:0007669"/>
    <property type="project" value="TreeGrafter"/>
</dbReference>
<dbReference type="GO" id="GO:0016045">
    <property type="term" value="P:detection of bacterium"/>
    <property type="evidence" value="ECO:0007669"/>
    <property type="project" value="TreeGrafter"/>
</dbReference>
<dbReference type="GO" id="GO:0045087">
    <property type="term" value="P:innate immune response"/>
    <property type="evidence" value="ECO:0007669"/>
    <property type="project" value="UniProtKB-KW"/>
</dbReference>
<dbReference type="GO" id="GO:0031640">
    <property type="term" value="P:killing of cells of another organism"/>
    <property type="evidence" value="ECO:0007669"/>
    <property type="project" value="UniProtKB-KW"/>
</dbReference>
<dbReference type="GO" id="GO:0009253">
    <property type="term" value="P:peptidoglycan catabolic process"/>
    <property type="evidence" value="ECO:0007669"/>
    <property type="project" value="InterPro"/>
</dbReference>
<dbReference type="CDD" id="cd06583">
    <property type="entry name" value="PGRP"/>
    <property type="match status" value="1"/>
</dbReference>
<dbReference type="FunFam" id="3.40.80.10:FF:000001">
    <property type="entry name" value="Peptidoglycan recognition protein 1"/>
    <property type="match status" value="1"/>
</dbReference>
<dbReference type="Gene3D" id="3.40.80.10">
    <property type="entry name" value="Peptidoglycan recognition protein-like"/>
    <property type="match status" value="1"/>
</dbReference>
<dbReference type="InterPro" id="IPR036505">
    <property type="entry name" value="Amidase/PGRP_sf"/>
</dbReference>
<dbReference type="InterPro" id="IPR002502">
    <property type="entry name" value="Amidase_domain"/>
</dbReference>
<dbReference type="InterPro" id="IPR017331">
    <property type="entry name" value="Peptidoglycan_recognition"/>
</dbReference>
<dbReference type="InterPro" id="IPR015510">
    <property type="entry name" value="PGRP"/>
</dbReference>
<dbReference type="InterPro" id="IPR006619">
    <property type="entry name" value="PGRP_domain_met/bac"/>
</dbReference>
<dbReference type="PANTHER" id="PTHR11022">
    <property type="entry name" value="PEPTIDOGLYCAN RECOGNITION PROTEIN"/>
    <property type="match status" value="1"/>
</dbReference>
<dbReference type="PANTHER" id="PTHR11022:SF58">
    <property type="entry name" value="PEPTIDOGLYCAN RECOGNITION PROTEIN 1"/>
    <property type="match status" value="1"/>
</dbReference>
<dbReference type="Pfam" id="PF01510">
    <property type="entry name" value="Amidase_2"/>
    <property type="match status" value="1"/>
</dbReference>
<dbReference type="PIRSF" id="PIRSF037945">
    <property type="entry name" value="PGRPs"/>
    <property type="match status" value="1"/>
</dbReference>
<dbReference type="SMART" id="SM00644">
    <property type="entry name" value="Ami_2"/>
    <property type="match status" value="1"/>
</dbReference>
<dbReference type="SMART" id="SM00701">
    <property type="entry name" value="PGRP"/>
    <property type="match status" value="1"/>
</dbReference>
<dbReference type="SUPFAM" id="SSF55846">
    <property type="entry name" value="N-acetylmuramoyl-L-alanine amidase-like"/>
    <property type="match status" value="1"/>
</dbReference>
<sequence>MSRRYTPLAWVLLALLGLGAAQDCGSIVSRGKWGALASKCSQRLRQPVRYVVVSHTAGSVCNTPASCQRQAQNVQHYHVRERGWCDVGYNFLIGEDGLVYEGRGWNTLGAHSGPTWNPIAIGISFMGNYMHRVPPASALRAAQSLLACGAARGYLTPNYEVKGHRDVQQTLSPGDELYKIIQQWPHYRRV</sequence>
<keyword id="KW-0044">Antibiotic</keyword>
<keyword id="KW-0929">Antimicrobial</keyword>
<keyword id="KW-1015">Disulfide bond</keyword>
<keyword id="KW-0295">Fungicide</keyword>
<keyword id="KW-0391">Immunity</keyword>
<keyword id="KW-0399">Innate immunity</keyword>
<keyword id="KW-0873">Pyrrolidone carboxylic acid</keyword>
<keyword id="KW-1185">Reference proteome</keyword>
<keyword id="KW-0964">Secreted</keyword>
<keyword id="KW-0732">Signal</keyword>